<name>PR1_FOEVU</name>
<comment type="allergen">
    <text evidence="2">Causes an allergic reaction in human. Binds to IgE.</text>
</comment>
<comment type="similarity">
    <text evidence="1">Belongs to the BetVI family.</text>
</comment>
<dbReference type="Allergome" id="1375">
    <property type="allergen name" value="Foe v 1"/>
</dbReference>
<dbReference type="GO" id="GO:0006952">
    <property type="term" value="P:defense response"/>
    <property type="evidence" value="ECO:0007669"/>
    <property type="project" value="UniProtKB-KW"/>
</dbReference>
<feature type="chain" id="PRO_0000422697" description="Pathogenesis-related protein">
    <location>
        <begin position="1"/>
        <end position="12" status="greater than"/>
    </location>
</feature>
<feature type="non-terminal residue" evidence="3">
    <location>
        <position position="12"/>
    </location>
</feature>
<evidence type="ECO:0000255" key="1"/>
<evidence type="ECO:0000269" key="2">
    <source>
    </source>
</evidence>
<evidence type="ECO:0000303" key="3">
    <source>
    </source>
</evidence>
<evidence type="ECO:0000305" key="4"/>
<keyword id="KW-0020">Allergen</keyword>
<keyword id="KW-0903">Direct protein sequencing</keyword>
<keyword id="KW-0568">Pathogenesis-related protein</keyword>
<keyword id="KW-0611">Plant defense</keyword>
<organism>
    <name type="scientific">Foeniculum vulgare</name>
    <name type="common">Fennel</name>
    <name type="synonym">Foeniculum officinale</name>
    <dbReference type="NCBI Taxonomy" id="2849586"/>
    <lineage>
        <taxon>Eukaryota</taxon>
        <taxon>Viridiplantae</taxon>
        <taxon>Streptophyta</taxon>
        <taxon>Embryophyta</taxon>
        <taxon>Tracheophyta</taxon>
        <taxon>Spermatophyta</taxon>
        <taxon>Magnoliopsida</taxon>
        <taxon>eudicotyledons</taxon>
        <taxon>Gunneridae</taxon>
        <taxon>Pentapetalae</taxon>
        <taxon>asterids</taxon>
        <taxon>campanulids</taxon>
        <taxon>Apiales</taxon>
        <taxon>Apiaceae</taxon>
        <taxon>Apioideae</taxon>
        <taxon>apioid superclade</taxon>
        <taxon>Apieae</taxon>
        <taxon>Anethum</taxon>
    </lineage>
</organism>
<accession>C0HJB6</accession>
<reference evidence="4" key="1">
    <citation type="journal article" date="2013" name="J. Agric. Food Chem.">
        <title>Fennel allergy is a lipid-transfer protein (LTP)-related food hypersensitivity associated with peach allergy.</title>
        <authorList>
            <person name="Pastorello E.A."/>
            <person name="Farioli L."/>
            <person name="Stafylaraki C."/>
            <person name="Scibilia J."/>
            <person name="Giuffrida M.G."/>
            <person name="Mascheri A."/>
            <person name="Piantanida M."/>
            <person name="Baro C."/>
            <person name="Primavesi L."/>
            <person name="Nichelatti M."/>
            <person name="Schroeder J.W."/>
            <person name="Pravettoni V."/>
        </authorList>
    </citation>
    <scope>PROTEIN SEQUENCE</scope>
    <scope>ALLERGEN</scope>
    <source>
        <tissue evidence="2">Leaf</tissue>
    </source>
</reference>
<proteinExistence type="evidence at protein level"/>
<sequence>GVQKSEVVITSA</sequence>
<protein>
    <recommendedName>
        <fullName>Pathogenesis-related protein</fullName>
        <shortName>PRP</shortName>
    </recommendedName>
    <allergenName>Foe v 1</allergenName>
</protein>